<reference key="1">
    <citation type="journal article" date="2003" name="Science">
        <title>Role of mobile DNA in the evolution of vancomycin-resistant Enterococcus faecalis.</title>
        <authorList>
            <person name="Paulsen I.T."/>
            <person name="Banerjei L."/>
            <person name="Myers G.S.A."/>
            <person name="Nelson K.E."/>
            <person name="Seshadri R."/>
            <person name="Read T.D."/>
            <person name="Fouts D.E."/>
            <person name="Eisen J.A."/>
            <person name="Gill S.R."/>
            <person name="Heidelberg J.F."/>
            <person name="Tettelin H."/>
            <person name="Dodson R.J."/>
            <person name="Umayam L.A."/>
            <person name="Brinkac L.M."/>
            <person name="Beanan M.J."/>
            <person name="Daugherty S.C."/>
            <person name="DeBoy R.T."/>
            <person name="Durkin S.A."/>
            <person name="Kolonay J.F."/>
            <person name="Madupu R."/>
            <person name="Nelson W.C."/>
            <person name="Vamathevan J.J."/>
            <person name="Tran B."/>
            <person name="Upton J."/>
            <person name="Hansen T."/>
            <person name="Shetty J."/>
            <person name="Khouri H.M."/>
            <person name="Utterback T.R."/>
            <person name="Radune D."/>
            <person name="Ketchum K.A."/>
            <person name="Dougherty B.A."/>
            <person name="Fraser C.M."/>
        </authorList>
    </citation>
    <scope>NUCLEOTIDE SEQUENCE [LARGE SCALE GENOMIC DNA]</scope>
    <source>
        <strain>ATCC 700802 / V583</strain>
    </source>
</reference>
<keyword id="KW-0030">Aminoacyl-tRNA synthetase</keyword>
<keyword id="KW-0067">ATP-binding</keyword>
<keyword id="KW-0963">Cytoplasm</keyword>
<keyword id="KW-0436">Ligase</keyword>
<keyword id="KW-0547">Nucleotide-binding</keyword>
<keyword id="KW-0648">Protein biosynthesis</keyword>
<keyword id="KW-1185">Reference proteome</keyword>
<protein>
    <recommendedName>
        <fullName evidence="1">Glycine--tRNA ligase alpha subunit</fullName>
        <ecNumber evidence="1">6.1.1.14</ecNumber>
    </recommendedName>
    <alternativeName>
        <fullName evidence="1">Glycyl-tRNA synthetase alpha subunit</fullName>
        <shortName evidence="1">GlyRS</shortName>
    </alternativeName>
</protein>
<dbReference type="EC" id="6.1.1.14" evidence="1"/>
<dbReference type="EMBL" id="AE016830">
    <property type="protein sequence ID" value="AAO82126.1"/>
    <property type="molecule type" value="Genomic_DNA"/>
</dbReference>
<dbReference type="RefSeq" id="NP_816056.1">
    <property type="nucleotide sequence ID" value="NC_004668.1"/>
</dbReference>
<dbReference type="RefSeq" id="WP_010706545.1">
    <property type="nucleotide sequence ID" value="NZ_KE136528.1"/>
</dbReference>
<dbReference type="SMR" id="Q831U2"/>
<dbReference type="STRING" id="226185.EF_2407"/>
<dbReference type="EnsemblBacteria" id="AAO82126">
    <property type="protein sequence ID" value="AAO82126"/>
    <property type="gene ID" value="EF_2407"/>
</dbReference>
<dbReference type="KEGG" id="efa:EF2407"/>
<dbReference type="PATRIC" id="fig|226185.45.peg.1136"/>
<dbReference type="eggNOG" id="COG0752">
    <property type="taxonomic scope" value="Bacteria"/>
</dbReference>
<dbReference type="HOGENOM" id="CLU_057066_1_0_9"/>
<dbReference type="Proteomes" id="UP000001415">
    <property type="component" value="Chromosome"/>
</dbReference>
<dbReference type="GO" id="GO:0005829">
    <property type="term" value="C:cytosol"/>
    <property type="evidence" value="ECO:0007669"/>
    <property type="project" value="TreeGrafter"/>
</dbReference>
<dbReference type="GO" id="GO:0005524">
    <property type="term" value="F:ATP binding"/>
    <property type="evidence" value="ECO:0007669"/>
    <property type="project" value="UniProtKB-UniRule"/>
</dbReference>
<dbReference type="GO" id="GO:0140096">
    <property type="term" value="F:catalytic activity, acting on a protein"/>
    <property type="evidence" value="ECO:0007669"/>
    <property type="project" value="UniProtKB-ARBA"/>
</dbReference>
<dbReference type="GO" id="GO:0004820">
    <property type="term" value="F:glycine-tRNA ligase activity"/>
    <property type="evidence" value="ECO:0007669"/>
    <property type="project" value="UniProtKB-UniRule"/>
</dbReference>
<dbReference type="GO" id="GO:0016740">
    <property type="term" value="F:transferase activity"/>
    <property type="evidence" value="ECO:0007669"/>
    <property type="project" value="UniProtKB-ARBA"/>
</dbReference>
<dbReference type="GO" id="GO:0006426">
    <property type="term" value="P:glycyl-tRNA aminoacylation"/>
    <property type="evidence" value="ECO:0007669"/>
    <property type="project" value="UniProtKB-UniRule"/>
</dbReference>
<dbReference type="CDD" id="cd00733">
    <property type="entry name" value="GlyRS_alpha_core"/>
    <property type="match status" value="1"/>
</dbReference>
<dbReference type="FunFam" id="3.30.930.10:FF:000006">
    <property type="entry name" value="Glycine--tRNA ligase alpha subunit"/>
    <property type="match status" value="1"/>
</dbReference>
<dbReference type="Gene3D" id="3.30.930.10">
    <property type="entry name" value="Bira Bifunctional Protein, Domain 2"/>
    <property type="match status" value="1"/>
</dbReference>
<dbReference type="Gene3D" id="1.20.58.180">
    <property type="entry name" value="Class II aaRS and biotin synthetases, domain 2"/>
    <property type="match status" value="1"/>
</dbReference>
<dbReference type="HAMAP" id="MF_00254">
    <property type="entry name" value="Gly_tRNA_synth_alpha"/>
    <property type="match status" value="1"/>
</dbReference>
<dbReference type="InterPro" id="IPR045864">
    <property type="entry name" value="aa-tRNA-synth_II/BPL/LPL"/>
</dbReference>
<dbReference type="InterPro" id="IPR006194">
    <property type="entry name" value="Gly-tRNA-synth_heterodimer"/>
</dbReference>
<dbReference type="InterPro" id="IPR002310">
    <property type="entry name" value="Gly-tRNA_ligase_asu"/>
</dbReference>
<dbReference type="NCBIfam" id="TIGR00388">
    <property type="entry name" value="glyQ"/>
    <property type="match status" value="1"/>
</dbReference>
<dbReference type="NCBIfam" id="NF006827">
    <property type="entry name" value="PRK09348.1"/>
    <property type="match status" value="1"/>
</dbReference>
<dbReference type="PANTHER" id="PTHR30075:SF2">
    <property type="entry name" value="GLYCINE--TRNA LIGASE, CHLOROPLASTIC_MITOCHONDRIAL 2"/>
    <property type="match status" value="1"/>
</dbReference>
<dbReference type="PANTHER" id="PTHR30075">
    <property type="entry name" value="GLYCYL-TRNA SYNTHETASE"/>
    <property type="match status" value="1"/>
</dbReference>
<dbReference type="Pfam" id="PF02091">
    <property type="entry name" value="tRNA-synt_2e"/>
    <property type="match status" value="1"/>
</dbReference>
<dbReference type="PRINTS" id="PR01044">
    <property type="entry name" value="TRNASYNTHGA"/>
</dbReference>
<dbReference type="SUPFAM" id="SSF55681">
    <property type="entry name" value="Class II aaRS and biotin synthetases"/>
    <property type="match status" value="1"/>
</dbReference>
<dbReference type="PROSITE" id="PS50861">
    <property type="entry name" value="AA_TRNA_LIGASE_II_GLYAB"/>
    <property type="match status" value="1"/>
</dbReference>
<name>SYGA_ENTFA</name>
<accession>Q831U2</accession>
<comment type="catalytic activity">
    <reaction evidence="1">
        <text>tRNA(Gly) + glycine + ATP = glycyl-tRNA(Gly) + AMP + diphosphate</text>
        <dbReference type="Rhea" id="RHEA:16013"/>
        <dbReference type="Rhea" id="RHEA-COMP:9664"/>
        <dbReference type="Rhea" id="RHEA-COMP:9683"/>
        <dbReference type="ChEBI" id="CHEBI:30616"/>
        <dbReference type="ChEBI" id="CHEBI:33019"/>
        <dbReference type="ChEBI" id="CHEBI:57305"/>
        <dbReference type="ChEBI" id="CHEBI:78442"/>
        <dbReference type="ChEBI" id="CHEBI:78522"/>
        <dbReference type="ChEBI" id="CHEBI:456215"/>
        <dbReference type="EC" id="6.1.1.14"/>
    </reaction>
</comment>
<comment type="subunit">
    <text evidence="1">Tetramer of two alpha and two beta subunits.</text>
</comment>
<comment type="subcellular location">
    <subcellularLocation>
        <location evidence="1">Cytoplasm</location>
    </subcellularLocation>
</comment>
<comment type="similarity">
    <text evidence="1">Belongs to the class-II aminoacyl-tRNA synthetase family.</text>
</comment>
<sequence length="302" mass="34923">MKNKLTVQEMILTLQKFWSSNGCMLMQAYDTEKGAGTMSPYTFLRAIGPEPWNAAYVEPSRRPADGRYGENPNRLYQHHQFQVVMKPSPENIQELYLESLKLLGIDPLEHDIRFVEDNWENPSMGCAGLGWEVWLDGMEITQFTYFQQVGGLQCHPVTSEITYGLERLASYIQEVESVYDLEWTQGVKYGEIFVQPEYEHSKYSFEISNQEMLLENFDKFEKEAKRCIEESLVHPAYDYILKCSHTFNLLDARGAVSVTERAGYLARIRNMARSVAKIFVAEREKLGFPLLNKDQHVSKEAE</sequence>
<organism>
    <name type="scientific">Enterococcus faecalis (strain ATCC 700802 / V583)</name>
    <dbReference type="NCBI Taxonomy" id="226185"/>
    <lineage>
        <taxon>Bacteria</taxon>
        <taxon>Bacillati</taxon>
        <taxon>Bacillota</taxon>
        <taxon>Bacilli</taxon>
        <taxon>Lactobacillales</taxon>
        <taxon>Enterococcaceae</taxon>
        <taxon>Enterococcus</taxon>
    </lineage>
</organism>
<evidence type="ECO:0000255" key="1">
    <source>
        <dbReference type="HAMAP-Rule" id="MF_00254"/>
    </source>
</evidence>
<proteinExistence type="inferred from homology"/>
<feature type="chain" id="PRO_1000047421" description="Glycine--tRNA ligase alpha subunit">
    <location>
        <begin position="1"/>
        <end position="302"/>
    </location>
</feature>
<gene>
    <name evidence="1" type="primary">glyQ</name>
    <name type="ordered locus">EF_2407</name>
</gene>